<keyword id="KW-0520">NAD</keyword>
<keyword id="KW-0560">Oxidoreductase</keyword>
<dbReference type="EC" id="1.1.1.18" evidence="1"/>
<dbReference type="EMBL" id="AM181176">
    <property type="protein sequence ID" value="CAY48814.1"/>
    <property type="molecule type" value="Genomic_DNA"/>
</dbReference>
<dbReference type="RefSeq" id="WP_012723781.1">
    <property type="nucleotide sequence ID" value="NC_012660.1"/>
</dbReference>
<dbReference type="SMR" id="C3K9I8"/>
<dbReference type="PATRIC" id="fig|216595.4.peg.2784"/>
<dbReference type="eggNOG" id="COG0673">
    <property type="taxonomic scope" value="Bacteria"/>
</dbReference>
<dbReference type="HOGENOM" id="CLU_023194_0_1_6"/>
<dbReference type="OrthoDB" id="9801953at2"/>
<dbReference type="GO" id="GO:0050112">
    <property type="term" value="F:inositol 2-dehydrogenase (NAD+) activity"/>
    <property type="evidence" value="ECO:0007669"/>
    <property type="project" value="UniProtKB-UniRule"/>
</dbReference>
<dbReference type="GO" id="GO:0000166">
    <property type="term" value="F:nucleotide binding"/>
    <property type="evidence" value="ECO:0007669"/>
    <property type="project" value="InterPro"/>
</dbReference>
<dbReference type="GO" id="GO:0019310">
    <property type="term" value="P:inositol catabolic process"/>
    <property type="evidence" value="ECO:0007669"/>
    <property type="project" value="UniProtKB-UniRule"/>
</dbReference>
<dbReference type="Gene3D" id="3.30.360.10">
    <property type="entry name" value="Dihydrodipicolinate Reductase, domain 2"/>
    <property type="match status" value="1"/>
</dbReference>
<dbReference type="Gene3D" id="3.40.50.720">
    <property type="entry name" value="NAD(P)-binding Rossmann-like Domain"/>
    <property type="match status" value="1"/>
</dbReference>
<dbReference type="HAMAP" id="MF_01671">
    <property type="entry name" value="IolG"/>
    <property type="match status" value="1"/>
</dbReference>
<dbReference type="InterPro" id="IPR050424">
    <property type="entry name" value="Gfo-Idh-MocA_inositol_DH"/>
</dbReference>
<dbReference type="InterPro" id="IPR004104">
    <property type="entry name" value="Gfo/Idh/MocA-like_OxRdtase_C"/>
</dbReference>
<dbReference type="InterPro" id="IPR000683">
    <property type="entry name" value="Gfo/Idh/MocA-like_OxRdtase_N"/>
</dbReference>
<dbReference type="InterPro" id="IPR023794">
    <property type="entry name" value="MI/DCI_dehydrogenase"/>
</dbReference>
<dbReference type="InterPro" id="IPR036291">
    <property type="entry name" value="NAD(P)-bd_dom_sf"/>
</dbReference>
<dbReference type="PANTHER" id="PTHR43593">
    <property type="match status" value="1"/>
</dbReference>
<dbReference type="PANTHER" id="PTHR43593:SF1">
    <property type="entry name" value="INOSITOL 2-DEHYDROGENASE"/>
    <property type="match status" value="1"/>
</dbReference>
<dbReference type="Pfam" id="PF01408">
    <property type="entry name" value="GFO_IDH_MocA"/>
    <property type="match status" value="1"/>
</dbReference>
<dbReference type="Pfam" id="PF02894">
    <property type="entry name" value="GFO_IDH_MocA_C"/>
    <property type="match status" value="1"/>
</dbReference>
<dbReference type="SUPFAM" id="SSF55347">
    <property type="entry name" value="Glyceraldehyde-3-phosphate dehydrogenase-like, C-terminal domain"/>
    <property type="match status" value="1"/>
</dbReference>
<dbReference type="SUPFAM" id="SSF51735">
    <property type="entry name" value="NAD(P)-binding Rossmann-fold domains"/>
    <property type="match status" value="1"/>
</dbReference>
<protein>
    <recommendedName>
        <fullName evidence="1">Inositol 2-dehydrogenase</fullName>
        <ecNumber evidence="1">1.1.1.18</ecNumber>
    </recommendedName>
    <alternativeName>
        <fullName evidence="1">Myo-inositol 2-dehydrogenase</fullName>
        <shortName evidence="1">MI 2-dehydrogenase</shortName>
    </alternativeName>
</protein>
<comment type="function">
    <text evidence="1">Involved in the oxidation of myo-inositol (MI) to 2-keto-myo-inositol (2KMI or 2-inosose).</text>
</comment>
<comment type="catalytic activity">
    <reaction evidence="1">
        <text>myo-inositol + NAD(+) = scyllo-inosose + NADH + H(+)</text>
        <dbReference type="Rhea" id="RHEA:16949"/>
        <dbReference type="ChEBI" id="CHEBI:15378"/>
        <dbReference type="ChEBI" id="CHEBI:17268"/>
        <dbReference type="ChEBI" id="CHEBI:17811"/>
        <dbReference type="ChEBI" id="CHEBI:57540"/>
        <dbReference type="ChEBI" id="CHEBI:57945"/>
        <dbReference type="EC" id="1.1.1.18"/>
    </reaction>
</comment>
<comment type="subunit">
    <text evidence="1">Homotetramer.</text>
</comment>
<comment type="similarity">
    <text evidence="1">Belongs to the Gfo/Idh/MocA family.</text>
</comment>
<feature type="chain" id="PRO_1000215885" description="Inositol 2-dehydrogenase">
    <location>
        <begin position="1"/>
        <end position="336"/>
    </location>
</feature>
<gene>
    <name evidence="1" type="primary">iolG</name>
    <name type="ordered locus">PFLU_2580</name>
</gene>
<proteinExistence type="inferred from homology"/>
<reference key="1">
    <citation type="journal article" date="2009" name="Genome Biol.">
        <title>Genomic and genetic analyses of diversity and plant interactions of Pseudomonas fluorescens.</title>
        <authorList>
            <person name="Silby M.W."/>
            <person name="Cerdeno-Tarraga A.M."/>
            <person name="Vernikos G.S."/>
            <person name="Giddens S.R."/>
            <person name="Jackson R.W."/>
            <person name="Preston G.M."/>
            <person name="Zhang X.-X."/>
            <person name="Moon C.D."/>
            <person name="Gehrig S.M."/>
            <person name="Godfrey S.A.C."/>
            <person name="Knight C.G."/>
            <person name="Malone J.G."/>
            <person name="Robinson Z."/>
            <person name="Spiers A.J."/>
            <person name="Harris S."/>
            <person name="Challis G.L."/>
            <person name="Yaxley A.M."/>
            <person name="Harris D."/>
            <person name="Seeger K."/>
            <person name="Murphy L."/>
            <person name="Rutter S."/>
            <person name="Squares R."/>
            <person name="Quail M.A."/>
            <person name="Saunders E."/>
            <person name="Mavromatis K."/>
            <person name="Brettin T.S."/>
            <person name="Bentley S.D."/>
            <person name="Hothersall J."/>
            <person name="Stephens E."/>
            <person name="Thomas C.M."/>
            <person name="Parkhill J."/>
            <person name="Levy S.B."/>
            <person name="Rainey P.B."/>
            <person name="Thomson N.R."/>
        </authorList>
    </citation>
    <scope>NUCLEOTIDE SEQUENCE [LARGE SCALE GENOMIC DNA]</scope>
    <source>
        <strain>SBW25</strain>
    </source>
</reference>
<name>IOLG_PSEFS</name>
<sequence length="336" mass="36605">MSLKLGVIGTGAIGRDHIRRCSQTLLNSQVVAVTDINLEQAAKVVADLKLDAEVYPDGHALINSPQVEAVLVTSWGPSHEEFVLAAIAAGKPVFCEKPLAVTAEGCRRIVDAEVAYGKRLVQVGFMRPYDEGYRALKAVIDSGQIGEPLMLHCAHRNPTVGENYKTDMAITDTLIHELDVLRWLLNDDYVSVQVVFPRKSSKALAHLRDPQIVLLETAKGTRIDVEVFVNCQYGYDIQCEVVGETGIAKLPEPSQVQLRSGAKLSNAILMDWKDRFIGAYDVELQAFIDSVRAGQVGGPSAWDGFAAAVAADACIEAQGSEQIVKMSLPDRPRFYG</sequence>
<evidence type="ECO:0000255" key="1">
    <source>
        <dbReference type="HAMAP-Rule" id="MF_01671"/>
    </source>
</evidence>
<accession>C3K9I8</accession>
<organism>
    <name type="scientific">Pseudomonas fluorescens (strain SBW25)</name>
    <dbReference type="NCBI Taxonomy" id="216595"/>
    <lineage>
        <taxon>Bacteria</taxon>
        <taxon>Pseudomonadati</taxon>
        <taxon>Pseudomonadota</taxon>
        <taxon>Gammaproteobacteria</taxon>
        <taxon>Pseudomonadales</taxon>
        <taxon>Pseudomonadaceae</taxon>
        <taxon>Pseudomonas</taxon>
    </lineage>
</organism>